<protein>
    <recommendedName>
        <fullName>Caffeoyl-CoA O-methyltransferase 1</fullName>
        <ecNumber>2.1.1.104</ecNumber>
    </recommendedName>
    <alternativeName>
        <fullName>Trans-caffeoyl-CoA 3-O-methyltransferase 1</fullName>
        <shortName>CCoAMT-1</shortName>
        <shortName>CCoAOMT-1</shortName>
    </alternativeName>
</protein>
<feature type="chain" id="PRO_0000165684" description="Caffeoyl-CoA O-methyltransferase 1">
    <location>
        <begin position="1"/>
        <end position="258"/>
    </location>
</feature>
<feature type="region of interest" description="Disordered" evidence="3">
    <location>
        <begin position="1"/>
        <end position="31"/>
    </location>
</feature>
<feature type="compositionally biased region" description="Low complexity" evidence="3">
    <location>
        <begin position="1"/>
        <end position="16"/>
    </location>
</feature>
<feature type="compositionally biased region" description="Basic and acidic residues" evidence="3">
    <location>
        <begin position="22"/>
        <end position="31"/>
    </location>
</feature>
<feature type="binding site" evidence="1">
    <location>
        <position position="32"/>
    </location>
    <ligand>
        <name>substrate</name>
    </ligand>
</feature>
<feature type="binding site" evidence="2">
    <location>
        <position position="74"/>
    </location>
    <ligand>
        <name>S-adenosyl-L-methionine</name>
        <dbReference type="ChEBI" id="CHEBI:59789"/>
    </ligand>
</feature>
<feature type="binding site" evidence="2">
    <location>
        <position position="96"/>
    </location>
    <ligand>
        <name>S-adenosyl-L-methionine</name>
        <dbReference type="ChEBI" id="CHEBI:59789"/>
    </ligand>
</feature>
<feature type="binding site" evidence="2">
    <location>
        <begin position="98"/>
        <end position="99"/>
    </location>
    <ligand>
        <name>S-adenosyl-L-methionine</name>
        <dbReference type="ChEBI" id="CHEBI:59789"/>
    </ligand>
</feature>
<feature type="binding site" evidence="2">
    <location>
        <position position="104"/>
    </location>
    <ligand>
        <name>S-adenosyl-L-methionine</name>
        <dbReference type="ChEBI" id="CHEBI:59789"/>
    </ligand>
</feature>
<feature type="binding site" evidence="2">
    <location>
        <position position="122"/>
    </location>
    <ligand>
        <name>S-adenosyl-L-methionine</name>
        <dbReference type="ChEBI" id="CHEBI:59789"/>
    </ligand>
</feature>
<feature type="binding site" evidence="2">
    <location>
        <position position="151"/>
    </location>
    <ligand>
        <name>S-adenosyl-L-methionine</name>
        <dbReference type="ChEBI" id="CHEBI:59789"/>
    </ligand>
</feature>
<feature type="binding site" evidence="2">
    <location>
        <position position="174"/>
    </location>
    <ligand>
        <name>a divalent metal cation</name>
        <dbReference type="ChEBI" id="CHEBI:60240"/>
    </ligand>
</feature>
<feature type="binding site" evidence="1">
    <location>
        <position position="174"/>
    </location>
    <ligand>
        <name>substrate</name>
    </ligand>
</feature>
<feature type="binding site" evidence="2">
    <location>
        <position position="176"/>
    </location>
    <ligand>
        <name>S-adenosyl-L-methionine</name>
        <dbReference type="ChEBI" id="CHEBI:59789"/>
    </ligand>
</feature>
<feature type="binding site" evidence="2">
    <location>
        <position position="200"/>
    </location>
    <ligand>
        <name>a divalent metal cation</name>
        <dbReference type="ChEBI" id="CHEBI:60240"/>
    </ligand>
</feature>
<feature type="binding site" evidence="2">
    <location>
        <position position="201"/>
    </location>
    <ligand>
        <name>a divalent metal cation</name>
        <dbReference type="ChEBI" id="CHEBI:60240"/>
    </ligand>
</feature>
<feature type="binding site" evidence="1">
    <location>
        <position position="205"/>
    </location>
    <ligand>
        <name>substrate</name>
    </ligand>
</feature>
<evidence type="ECO:0000250" key="1">
    <source>
        <dbReference type="UniProtKB" id="Q40313"/>
    </source>
</evidence>
<evidence type="ECO:0000255" key="2">
    <source>
        <dbReference type="PROSITE-ProRule" id="PRU01019"/>
    </source>
</evidence>
<evidence type="ECO:0000256" key="3">
    <source>
        <dbReference type="SAM" id="MobiDB-lite"/>
    </source>
</evidence>
<dbReference type="EC" id="2.1.1.104"/>
<dbReference type="EMBL" id="AJ242980">
    <property type="protein sequence ID" value="CAB45149.1"/>
    <property type="molecule type" value="mRNA"/>
</dbReference>
<dbReference type="SMR" id="Q9XGD6"/>
<dbReference type="FunCoup" id="Q9XGD6">
    <property type="interactions" value="1115"/>
</dbReference>
<dbReference type="STRING" id="4577.Q9XGD6"/>
<dbReference type="PaxDb" id="4577-GRMZM2G127948_P01"/>
<dbReference type="eggNOG" id="KOG1663">
    <property type="taxonomic scope" value="Eukaryota"/>
</dbReference>
<dbReference type="InParanoid" id="Q9XGD6"/>
<dbReference type="BRENDA" id="2.1.1.104">
    <property type="organism ID" value="6752"/>
</dbReference>
<dbReference type="UniPathway" id="UPA00711"/>
<dbReference type="Proteomes" id="UP000007305">
    <property type="component" value="Unplaced"/>
</dbReference>
<dbReference type="ExpressionAtlas" id="Q9XGD6">
    <property type="expression patterns" value="baseline and differential"/>
</dbReference>
<dbReference type="GO" id="GO:0042409">
    <property type="term" value="F:caffeoyl-CoA O-methyltransferase activity"/>
    <property type="evidence" value="ECO:0007669"/>
    <property type="project" value="UniProtKB-EC"/>
</dbReference>
<dbReference type="GO" id="GO:0046872">
    <property type="term" value="F:metal ion binding"/>
    <property type="evidence" value="ECO:0007669"/>
    <property type="project" value="UniProtKB-KW"/>
</dbReference>
<dbReference type="GO" id="GO:0008757">
    <property type="term" value="F:S-adenosylmethionine-dependent methyltransferase activity"/>
    <property type="evidence" value="ECO:0000318"/>
    <property type="project" value="GO_Central"/>
</dbReference>
<dbReference type="GO" id="GO:0009809">
    <property type="term" value="P:lignin biosynthetic process"/>
    <property type="evidence" value="ECO:0007669"/>
    <property type="project" value="UniProtKB-KW"/>
</dbReference>
<dbReference type="GO" id="GO:0032259">
    <property type="term" value="P:methylation"/>
    <property type="evidence" value="ECO:0007669"/>
    <property type="project" value="UniProtKB-KW"/>
</dbReference>
<dbReference type="CDD" id="cd02440">
    <property type="entry name" value="AdoMet_MTases"/>
    <property type="match status" value="1"/>
</dbReference>
<dbReference type="FunFam" id="3.40.50.150:FF:000147">
    <property type="entry name" value="Caffeoyl-CoA O-methyltransferase 1"/>
    <property type="match status" value="1"/>
</dbReference>
<dbReference type="Gene3D" id="3.40.50.150">
    <property type="entry name" value="Vaccinia Virus protein VP39"/>
    <property type="match status" value="1"/>
</dbReference>
<dbReference type="InterPro" id="IPR050362">
    <property type="entry name" value="Cation-dep_OMT"/>
</dbReference>
<dbReference type="InterPro" id="IPR029063">
    <property type="entry name" value="SAM-dependent_MTases_sf"/>
</dbReference>
<dbReference type="InterPro" id="IPR002935">
    <property type="entry name" value="SAM_O-MeTrfase"/>
</dbReference>
<dbReference type="PANTHER" id="PTHR10509:SF81">
    <property type="entry name" value="CAFFEOYL-COA O-METHYLTRANSFERASE 1"/>
    <property type="match status" value="1"/>
</dbReference>
<dbReference type="PANTHER" id="PTHR10509">
    <property type="entry name" value="O-METHYLTRANSFERASE-RELATED"/>
    <property type="match status" value="1"/>
</dbReference>
<dbReference type="Pfam" id="PF01596">
    <property type="entry name" value="Methyltransf_3"/>
    <property type="match status" value="1"/>
</dbReference>
<dbReference type="SUPFAM" id="SSF53335">
    <property type="entry name" value="S-adenosyl-L-methionine-dependent methyltransferases"/>
    <property type="match status" value="1"/>
</dbReference>
<dbReference type="PROSITE" id="PS51682">
    <property type="entry name" value="SAM_OMT_I"/>
    <property type="match status" value="1"/>
</dbReference>
<gene>
    <name type="primary">CCOAOMT1</name>
</gene>
<accession>Q9XGD6</accession>
<proteinExistence type="evidence at transcript level"/>
<comment type="function">
    <text>Methylates caffeoyl-CoA to feruloyl-CoA and 5-hydroxyferuloyl-CoA to sinapoyl-CoA. Plays a role in the synthesis of feruloylated polysaccharides. Involved in the reinforcement of the plant cell wall. Also involved in the responding to wounding or pathogen challenge by the increased formation of cell wall-bound ferulic acid polymers.</text>
</comment>
<comment type="catalytic activity">
    <reaction>
        <text>(E)-caffeoyl-CoA + S-adenosyl-L-methionine = (E)-feruloyl-CoA + S-adenosyl-L-homocysteine + H(+)</text>
        <dbReference type="Rhea" id="RHEA:16925"/>
        <dbReference type="ChEBI" id="CHEBI:15378"/>
        <dbReference type="ChEBI" id="CHEBI:57856"/>
        <dbReference type="ChEBI" id="CHEBI:59789"/>
        <dbReference type="ChEBI" id="CHEBI:87136"/>
        <dbReference type="ChEBI" id="CHEBI:87305"/>
        <dbReference type="EC" id="2.1.1.104"/>
    </reaction>
</comment>
<comment type="cofactor">
    <cofactor evidence="1">
        <name>a divalent metal cation</name>
        <dbReference type="ChEBI" id="CHEBI:60240"/>
    </cofactor>
    <text evidence="1">Binds 1 divalent metal cation per subunit.</text>
</comment>
<comment type="pathway">
    <text>Aromatic compound metabolism; phenylpropanoid biosynthesis.</text>
</comment>
<comment type="similarity">
    <text evidence="2">Belongs to the class I-like SAM-binding methyltransferase superfamily. Cation-dependent O-methyltransferase family. CCoAMT subfamily.</text>
</comment>
<sequence length="258" mass="28863">MATTATEAAPAQEQQANGNGEQKTRHSEVGHKSLLKSDDLYQYILDTSVYPREPESMKELREVTAKHPWNLMTTSADEGQFLNMLIKLIGAKKTMEIGVYTGYSLLATALALPEDGTILAMDINRENYELGLPCIEKAGVAHKIDFREGPALPVLDDLIAEEKNHGSFDFVFVDADKDNYLNYHERLLKLVKLGGLIGYDNTLWNGSVVLPDDAPMRKYIRFYRDFVLVLNKALAADDRVEICQLPVGDGVTLCRRVK</sequence>
<name>CAMT1_MAIZE</name>
<keyword id="KW-0438">Lignin biosynthesis</keyword>
<keyword id="KW-0479">Metal-binding</keyword>
<keyword id="KW-0489">Methyltransferase</keyword>
<keyword id="KW-1185">Reference proteome</keyword>
<keyword id="KW-0949">S-adenosyl-L-methionine</keyword>
<keyword id="KW-0808">Transferase</keyword>
<reference key="1">
    <citation type="online journal article" date="1999" name="Plant Gene Register">
        <title>Nucleotide sequence of two cDNAs coding for caffeoyl-coenzyme A O-methyltransferase (CCoAOMT) and study of their expression in Zea mays.</title>
        <authorList>
            <person name="Civardi L."/>
            <person name="Rigau J."/>
            <person name="Puigdomenech P."/>
        </authorList>
        <locator>PGR99-113</locator>
    </citation>
    <scope>NUCLEOTIDE SEQUENCE [MRNA]</scope>
    <source>
        <strain>cv. Wisconsin 64A</strain>
    </source>
</reference>
<organism>
    <name type="scientific">Zea mays</name>
    <name type="common">Maize</name>
    <dbReference type="NCBI Taxonomy" id="4577"/>
    <lineage>
        <taxon>Eukaryota</taxon>
        <taxon>Viridiplantae</taxon>
        <taxon>Streptophyta</taxon>
        <taxon>Embryophyta</taxon>
        <taxon>Tracheophyta</taxon>
        <taxon>Spermatophyta</taxon>
        <taxon>Magnoliopsida</taxon>
        <taxon>Liliopsida</taxon>
        <taxon>Poales</taxon>
        <taxon>Poaceae</taxon>
        <taxon>PACMAD clade</taxon>
        <taxon>Panicoideae</taxon>
        <taxon>Andropogonodae</taxon>
        <taxon>Andropogoneae</taxon>
        <taxon>Tripsacinae</taxon>
        <taxon>Zea</taxon>
    </lineage>
</organism>